<keyword id="KW-1185">Reference proteome</keyword>
<organism>
    <name type="scientific">Invertebrate iridescent virus 3</name>
    <name type="common">IIV-3</name>
    <name type="synonym">Mosquito iridescent virus</name>
    <dbReference type="NCBI Taxonomy" id="345201"/>
    <lineage>
        <taxon>Viruses</taxon>
        <taxon>Varidnaviria</taxon>
        <taxon>Bamfordvirae</taxon>
        <taxon>Nucleocytoviricota</taxon>
        <taxon>Megaviricetes</taxon>
        <taxon>Pimascovirales</taxon>
        <taxon>Iridoviridae</taxon>
        <taxon>Betairidovirinae</taxon>
        <taxon>Chloriridovirus</taxon>
    </lineage>
</organism>
<name>VF268_IIV3</name>
<feature type="chain" id="PRO_0000377777" description="Uncharacterized protein 074L">
    <location>
        <begin position="1"/>
        <end position="834"/>
    </location>
</feature>
<feature type="region of interest" description="Disordered" evidence="1">
    <location>
        <begin position="1"/>
        <end position="38"/>
    </location>
</feature>
<feature type="region of interest" description="Disordered" evidence="1">
    <location>
        <begin position="166"/>
        <end position="280"/>
    </location>
</feature>
<feature type="region of interest" description="Disordered" evidence="1">
    <location>
        <begin position="767"/>
        <end position="787"/>
    </location>
</feature>
<feature type="compositionally biased region" description="Low complexity" evidence="1">
    <location>
        <begin position="7"/>
        <end position="18"/>
    </location>
</feature>
<feature type="compositionally biased region" description="Low complexity" evidence="1">
    <location>
        <begin position="166"/>
        <end position="252"/>
    </location>
</feature>
<organismHost>
    <name type="scientific">Aedes vexans</name>
    <name type="common">Inland floodwater mosquito</name>
    <name type="synonym">Culex vexans</name>
    <dbReference type="NCBI Taxonomy" id="7163"/>
</organismHost>
<organismHost>
    <name type="scientific">Culex territans</name>
    <dbReference type="NCBI Taxonomy" id="42431"/>
</organismHost>
<organismHost>
    <name type="scientific">Culiseta annulata</name>
    <dbReference type="NCBI Taxonomy" id="332058"/>
</organismHost>
<organismHost>
    <name type="scientific">Ochlerotatus sollicitans</name>
    <name type="common">eastern saltmarsh mosquito</name>
    <dbReference type="NCBI Taxonomy" id="310513"/>
</organismHost>
<organismHost>
    <name type="scientific">Ochlerotatus taeniorhynchus</name>
    <name type="common">Black salt marsh mosquito</name>
    <name type="synonym">Aedes taeniorhynchus</name>
    <dbReference type="NCBI Taxonomy" id="329105"/>
</organismHost>
<organismHost>
    <name type="scientific">Psorophora ferox</name>
    <dbReference type="NCBI Taxonomy" id="7183"/>
</organismHost>
<protein>
    <recommendedName>
        <fullName>Uncharacterized protein 074L</fullName>
    </recommendedName>
</protein>
<reference key="1">
    <citation type="journal article" date="2006" name="J. Virol.">
        <title>Genome of invertebrate iridescent virus type 3 (mosquito iridescent virus).</title>
        <authorList>
            <person name="Delhon G."/>
            <person name="Tulman E.R."/>
            <person name="Afonso C.L."/>
            <person name="Lu Z."/>
            <person name="Becnel J.J."/>
            <person name="Moser B.A."/>
            <person name="Kutish G.F."/>
            <person name="Rock D.L."/>
        </authorList>
    </citation>
    <scope>NUCLEOTIDE SEQUENCE [LARGE SCALE GENOMIC DNA]</scope>
</reference>
<dbReference type="EMBL" id="DQ643392">
    <property type="protein sequence ID" value="ABF82104.1"/>
    <property type="molecule type" value="Genomic_DNA"/>
</dbReference>
<dbReference type="RefSeq" id="YP_654646.1">
    <property type="nucleotide sequence ID" value="NC_008187.1"/>
</dbReference>
<dbReference type="KEGG" id="vg:4156285"/>
<dbReference type="OrthoDB" id="5869at10239"/>
<dbReference type="Proteomes" id="UP000001358">
    <property type="component" value="Genome"/>
</dbReference>
<gene>
    <name type="ORF">IIV3-074L</name>
</gene>
<proteinExistence type="inferred from homology"/>
<evidence type="ECO:0000256" key="1">
    <source>
        <dbReference type="SAM" id="MobiDB-lite"/>
    </source>
</evidence>
<evidence type="ECO:0000305" key="2"/>
<accession>Q196Y6</accession>
<sequence length="834" mass="94147">MGSLDYSSKNNSSLGSISSDDESIVLDNENNGAPKAQPRTTLLQLKKSLEADYKKNLYKNADGQDHLLLQNTFRKILNYGTITLDAVKKELTTYIQDSENEPYSAVVRSLLVKVVESKTIPVDRLVDFMTAFNGQSLPIDIFYKKYFGPDALKPTVWDVFGSSLSDLSSSDSDSSSTTTTTSDTSIWSDSSSASAQRNRSPTRSTRSSRSSRSSIRSSSSTSSRSSRSSSSSSSSSNSSSDTTSSSSSSSSSSEDDDESKAPAMVQSPTNNKIREFTPQERQRIELVKERAENKKIVPREAKVVQVQPGGKPGGVDVNFATRQSSGGPSPVKRTFSDPVSSTSQKDCEFLYKKLPWVKDIINHVYVYPVRGNFEGIIEYDKFIEHDGRKWYHPKEQYYTLQCMGTKSQRGKTLTITRDGKTWKLMVAIDTGTRGIVVQNEDMLTAELDYIRTWKTSKNDHIRDFMENVPTADMVQLAKIVLVNALQDSLGATVPLVYKSTTSPFIETVVDTIFKNSKNGESFVRILSNLVVFLTINLSFISSSVFAKRLRRQIYLPETLPFLTDADKLPEVFVVKNIPENTKKFVVEKLEEERTSFTRQFYDNLRIDSSLIRKPTKPILWNKPTTQVELPDIKTVCKNRNDVQDEQDEDVVYYTDMNEIYCFNVYKLWSLFRQTDTPINPYTSRPFTDQFIQIFLTRYASKPLVRKIENLTKTTATSRLEELIERELSLIENNLIEAENPTFIQKYKTTITQTPSDDYLPVQGKRRISRVTPSPPGGATKVRENFHPPGSAAGNTCMECRTPIEPSSDGIMSVFRNKMVRFCSYDCLERNKAFK</sequence>
<comment type="similarity">
    <text evidence="2">Belongs to the IIV-6 268L family.</text>
</comment>